<feature type="chain" id="PRO_0000048663" description="Sex-determining region Y protein">
    <location>
        <begin position="1"/>
        <end position="204"/>
    </location>
</feature>
<feature type="DNA-binding region" description="HMG box" evidence="3">
    <location>
        <begin position="54"/>
        <end position="122"/>
    </location>
</feature>
<feature type="region of interest" description="Disordered" evidence="4">
    <location>
        <begin position="30"/>
        <end position="52"/>
    </location>
</feature>
<feature type="region of interest" description="Disordered" evidence="4">
    <location>
        <begin position="169"/>
        <end position="204"/>
    </location>
</feature>
<feature type="compositionally biased region" description="Polar residues" evidence="4">
    <location>
        <begin position="175"/>
        <end position="187"/>
    </location>
</feature>
<feature type="compositionally biased region" description="Basic and acidic residues" evidence="4">
    <location>
        <begin position="189"/>
        <end position="204"/>
    </location>
</feature>
<proteinExistence type="inferred from homology"/>
<sequence>MFRIVNGEDYSPAVQQRNSLDFGKAPSLLWTDNGGSNDRCETGGNGRESGQDRVKRPMNAFIVWSRDQRRKVALENPQMQNSEISKRLGYDWKMLTEAEKQPFFEEAQRLRAMHRNKYPGYKYRPRRKAERPQKLLPADSSVLCSRMHIEETLYPFTYKDGCAKATRSRMESRLSHSQPTNITSSLLPQEHRSSWTSLSHDRVT</sequence>
<reference key="1">
    <citation type="journal article" date="2003" name="Mammal Study">
        <title>SRY gene structure and phylogeny in the cetacean species.</title>
        <authorList>
            <person name="Nishida S."/>
            <person name="Pastene L.A."/>
            <person name="Goto M."/>
            <person name="Koike H."/>
        </authorList>
    </citation>
    <scope>NUCLEOTIDE SEQUENCE [GENOMIC DNA]</scope>
</reference>
<accession>Q864Q7</accession>
<gene>
    <name type="primary">SRY</name>
    <name type="synonym">TDF</name>
</gene>
<keyword id="KW-0010">Activator</keyword>
<keyword id="KW-0112">Calmodulin-binding</keyword>
<keyword id="KW-0963">Cytoplasm</keyword>
<keyword id="KW-0221">Differentiation</keyword>
<keyword id="KW-0238">DNA-binding</keyword>
<keyword id="KW-0539">Nucleus</keyword>
<keyword id="KW-0726">Sexual differentiation</keyword>
<keyword id="KW-0804">Transcription</keyword>
<keyword id="KW-0805">Transcription regulation</keyword>
<organism>
    <name type="scientific">Eubalaena australis</name>
    <name type="common">Southern right whale</name>
    <dbReference type="NCBI Taxonomy" id="160595"/>
    <lineage>
        <taxon>Eukaryota</taxon>
        <taxon>Metazoa</taxon>
        <taxon>Chordata</taxon>
        <taxon>Craniata</taxon>
        <taxon>Vertebrata</taxon>
        <taxon>Euteleostomi</taxon>
        <taxon>Mammalia</taxon>
        <taxon>Eutheria</taxon>
        <taxon>Laurasiatheria</taxon>
        <taxon>Artiodactyla</taxon>
        <taxon>Whippomorpha</taxon>
        <taxon>Cetacea</taxon>
        <taxon>Mysticeti</taxon>
        <taxon>Balaenidae</taxon>
        <taxon>Eubalaena</taxon>
    </lineage>
</organism>
<dbReference type="EMBL" id="AB108514">
    <property type="protein sequence ID" value="BAC75646.1"/>
    <property type="molecule type" value="Genomic_DNA"/>
</dbReference>
<dbReference type="SMR" id="Q864Q7"/>
<dbReference type="GO" id="GO:0005737">
    <property type="term" value="C:cytoplasm"/>
    <property type="evidence" value="ECO:0007669"/>
    <property type="project" value="UniProtKB-SubCell"/>
</dbReference>
<dbReference type="GO" id="GO:0016607">
    <property type="term" value="C:nuclear speck"/>
    <property type="evidence" value="ECO:0007669"/>
    <property type="project" value="UniProtKB-SubCell"/>
</dbReference>
<dbReference type="GO" id="GO:0005634">
    <property type="term" value="C:nucleus"/>
    <property type="evidence" value="ECO:0000250"/>
    <property type="project" value="UniProtKB"/>
</dbReference>
<dbReference type="GO" id="GO:0005516">
    <property type="term" value="F:calmodulin binding"/>
    <property type="evidence" value="ECO:0007669"/>
    <property type="project" value="UniProtKB-KW"/>
</dbReference>
<dbReference type="GO" id="GO:0001228">
    <property type="term" value="F:DNA-binding transcription activator activity, RNA polymerase II-specific"/>
    <property type="evidence" value="ECO:0007669"/>
    <property type="project" value="TreeGrafter"/>
</dbReference>
<dbReference type="GO" id="GO:0000978">
    <property type="term" value="F:RNA polymerase II cis-regulatory region sequence-specific DNA binding"/>
    <property type="evidence" value="ECO:0007669"/>
    <property type="project" value="TreeGrafter"/>
</dbReference>
<dbReference type="GO" id="GO:0030154">
    <property type="term" value="P:cell differentiation"/>
    <property type="evidence" value="ECO:0007669"/>
    <property type="project" value="UniProtKB-KW"/>
</dbReference>
<dbReference type="GO" id="GO:0030238">
    <property type="term" value="P:male sex determination"/>
    <property type="evidence" value="ECO:0007669"/>
    <property type="project" value="InterPro"/>
</dbReference>
<dbReference type="GO" id="GO:0007548">
    <property type="term" value="P:sex differentiation"/>
    <property type="evidence" value="ECO:0007669"/>
    <property type="project" value="UniProtKB-KW"/>
</dbReference>
<dbReference type="CDD" id="cd22034">
    <property type="entry name" value="HMG-box_SoxA_SRY"/>
    <property type="match status" value="1"/>
</dbReference>
<dbReference type="FunFam" id="1.10.30.10:FF:000002">
    <property type="entry name" value="transcription factor Sox-2"/>
    <property type="match status" value="1"/>
</dbReference>
<dbReference type="Gene3D" id="1.10.30.10">
    <property type="entry name" value="High mobility group box domain"/>
    <property type="match status" value="1"/>
</dbReference>
<dbReference type="InterPro" id="IPR009071">
    <property type="entry name" value="HMG_box_dom"/>
</dbReference>
<dbReference type="InterPro" id="IPR036910">
    <property type="entry name" value="HMG_box_dom_sf"/>
</dbReference>
<dbReference type="InterPro" id="IPR017253">
    <property type="entry name" value="SRY"/>
</dbReference>
<dbReference type="InterPro" id="IPR050140">
    <property type="entry name" value="SRY-related_HMG-box_TF-like"/>
</dbReference>
<dbReference type="PANTHER" id="PTHR10270:SF161">
    <property type="entry name" value="SEX-DETERMINING REGION Y PROTEIN"/>
    <property type="match status" value="1"/>
</dbReference>
<dbReference type="PANTHER" id="PTHR10270">
    <property type="entry name" value="SOX TRANSCRIPTION FACTOR"/>
    <property type="match status" value="1"/>
</dbReference>
<dbReference type="Pfam" id="PF00505">
    <property type="entry name" value="HMG_box"/>
    <property type="match status" value="1"/>
</dbReference>
<dbReference type="PIRSF" id="PIRSF037653">
    <property type="entry name" value="SRY"/>
    <property type="match status" value="1"/>
</dbReference>
<dbReference type="SMART" id="SM00398">
    <property type="entry name" value="HMG"/>
    <property type="match status" value="1"/>
</dbReference>
<dbReference type="SUPFAM" id="SSF47095">
    <property type="entry name" value="HMG-box"/>
    <property type="match status" value="1"/>
</dbReference>
<dbReference type="PROSITE" id="PS50118">
    <property type="entry name" value="HMG_BOX_2"/>
    <property type="match status" value="1"/>
</dbReference>
<protein>
    <recommendedName>
        <fullName>Sex-determining region Y protein</fullName>
    </recommendedName>
    <alternativeName>
        <fullName>Testis-determining factor</fullName>
    </alternativeName>
</protein>
<name>SRY_EUBAS</name>
<comment type="function">
    <text evidence="1 2">Transcriptional regulator that controls a genetic switch in male development. It is necessary and sufficient for initiating male sex determination by directing the development of supporting cell precursors (pre-Sertoli cells) as Sertoli rather than granulosa cells. Involved in different aspects of gene regulation including promoter activation or repression. Binds to the DNA consensus sequence 5'-[AT]AACAA[AT]-3'. SRY HMG box recognizes DNA by partial intercalation in the minor groove and promotes DNA bending. Also involved in pre-mRNA splicing (By similarity). In male adult brain involved in the maintenance of motor functions of dopaminergic neurons (By similarity).</text>
</comment>
<comment type="subunit">
    <text evidence="2">Interacts with CALM, EP300, HDAC3, KPNB1, ZNF208 isoform KRAB-O, PARP1, SLC9A3R2 and WT1. The interaction with EP300 modulates its DNA-binding activity. The interaction with KPNB1 is sensitive to dissociation by Ran in the GTP-bound form. Interaction with PARP1 impaired its DNA-binding activity.</text>
</comment>
<comment type="subcellular location">
    <subcellularLocation>
        <location evidence="2">Nucleus speckle</location>
    </subcellularLocation>
    <subcellularLocation>
        <location evidence="2">Cytoplasm</location>
    </subcellularLocation>
    <subcellularLocation>
        <location evidence="2">Nucleus</location>
    </subcellularLocation>
</comment>
<comment type="similarity">
    <text evidence="5">Belongs to the SRY family.</text>
</comment>
<comment type="online information" name="Protein Spotlight">
    <link uri="https://www.proteinspotlight.org/back_issues/080"/>
    <text>The tenuous nature of sex - Issue 80 of March 2007</text>
</comment>
<evidence type="ECO:0000250" key="1">
    <source>
        <dbReference type="UniProtKB" id="P36394"/>
    </source>
</evidence>
<evidence type="ECO:0000250" key="2">
    <source>
        <dbReference type="UniProtKB" id="Q05066"/>
    </source>
</evidence>
<evidence type="ECO:0000255" key="3">
    <source>
        <dbReference type="PROSITE-ProRule" id="PRU00267"/>
    </source>
</evidence>
<evidence type="ECO:0000256" key="4">
    <source>
        <dbReference type="SAM" id="MobiDB-lite"/>
    </source>
</evidence>
<evidence type="ECO:0000305" key="5"/>